<protein>
    <recommendedName>
        <fullName evidence="1">IMP cyclohydrolase</fullName>
        <ecNumber evidence="1">3.5.4.10</ecNumber>
    </recommendedName>
    <alternativeName>
        <fullName evidence="1">IMP synthase</fullName>
    </alternativeName>
    <alternativeName>
        <fullName evidence="1">Inosinicase</fullName>
    </alternativeName>
</protein>
<dbReference type="EC" id="3.5.4.10" evidence="1"/>
<dbReference type="EMBL" id="AE000666">
    <property type="protein sequence ID" value="AAB85516.1"/>
    <property type="molecule type" value="Genomic_DNA"/>
</dbReference>
<dbReference type="PIR" id="B69003">
    <property type="entry name" value="B69003"/>
</dbReference>
<dbReference type="RefSeq" id="WP_010876651.1">
    <property type="nucleotide sequence ID" value="NC_000916.1"/>
</dbReference>
<dbReference type="PDB" id="1KUU">
    <property type="method" value="X-ray"/>
    <property type="resolution" value="2.20 A"/>
    <property type="chains" value="A=1-202"/>
</dbReference>
<dbReference type="PDB" id="2NTK">
    <property type="method" value="X-ray"/>
    <property type="resolution" value="2.03 A"/>
    <property type="chains" value="A/B/C/D=1-202"/>
</dbReference>
<dbReference type="PDB" id="2NTL">
    <property type="method" value="X-ray"/>
    <property type="resolution" value="2.60 A"/>
    <property type="chains" value="A/B/C/D=1-202"/>
</dbReference>
<dbReference type="PDB" id="2NTM">
    <property type="method" value="X-ray"/>
    <property type="resolution" value="2.60 A"/>
    <property type="chains" value="A/B/C/D=1-202"/>
</dbReference>
<dbReference type="PDBsum" id="1KUU"/>
<dbReference type="PDBsum" id="2NTK"/>
<dbReference type="PDBsum" id="2NTL"/>
<dbReference type="PDBsum" id="2NTM"/>
<dbReference type="SMR" id="O27099"/>
<dbReference type="STRING" id="187420.MTH_1020"/>
<dbReference type="PaxDb" id="187420-MTH_1020"/>
<dbReference type="EnsemblBacteria" id="AAB85516">
    <property type="protein sequence ID" value="AAB85516"/>
    <property type="gene ID" value="MTH_1020"/>
</dbReference>
<dbReference type="GeneID" id="1471428"/>
<dbReference type="GeneID" id="77401551"/>
<dbReference type="KEGG" id="mth:MTH_1020"/>
<dbReference type="PATRIC" id="fig|187420.15.peg.1003"/>
<dbReference type="HOGENOM" id="CLU_1352116_0_0_2"/>
<dbReference type="InParanoid" id="O27099"/>
<dbReference type="UniPathway" id="UPA00074">
    <property type="reaction ID" value="UER00135"/>
</dbReference>
<dbReference type="EvolutionaryTrace" id="O27099"/>
<dbReference type="Proteomes" id="UP000005223">
    <property type="component" value="Chromosome"/>
</dbReference>
<dbReference type="GO" id="GO:0003937">
    <property type="term" value="F:IMP cyclohydrolase activity"/>
    <property type="evidence" value="ECO:0007669"/>
    <property type="project" value="UniProtKB-UniRule"/>
</dbReference>
<dbReference type="GO" id="GO:0006189">
    <property type="term" value="P:'de novo' IMP biosynthetic process"/>
    <property type="evidence" value="ECO:0007669"/>
    <property type="project" value="UniProtKB-UniRule"/>
</dbReference>
<dbReference type="Gene3D" id="3.60.20.20">
    <property type="entry name" value="Inosine monophosphate cyclohydrolase-like"/>
    <property type="match status" value="1"/>
</dbReference>
<dbReference type="HAMAP" id="MF_00705">
    <property type="entry name" value="IMP_cyclohydrol"/>
    <property type="match status" value="1"/>
</dbReference>
<dbReference type="InterPro" id="IPR010191">
    <property type="entry name" value="IMP_cyclohydrolase"/>
</dbReference>
<dbReference type="InterPro" id="IPR020600">
    <property type="entry name" value="IMP_cyclohydrolase-like"/>
</dbReference>
<dbReference type="InterPro" id="IPR036795">
    <property type="entry name" value="IMP_cyclohydrolase-like_sf"/>
</dbReference>
<dbReference type="NCBIfam" id="NF003167">
    <property type="entry name" value="PRK04151.1"/>
    <property type="match status" value="1"/>
</dbReference>
<dbReference type="NCBIfam" id="TIGR01922">
    <property type="entry name" value="purO_arch"/>
    <property type="match status" value="1"/>
</dbReference>
<dbReference type="Pfam" id="PF07826">
    <property type="entry name" value="IMP_cyclohyd"/>
    <property type="match status" value="1"/>
</dbReference>
<dbReference type="PIRSF" id="PIRSF004866">
    <property type="entry name" value="IMP_cclhdr_arch"/>
    <property type="match status" value="1"/>
</dbReference>
<dbReference type="SUPFAM" id="SSF75569">
    <property type="entry name" value="Archaeal IMP cyclohydrolase PurO"/>
    <property type="match status" value="1"/>
</dbReference>
<feature type="chain" id="PRO_0000145797" description="IMP cyclohydrolase">
    <location>
        <begin position="1"/>
        <end position="202"/>
    </location>
</feature>
<feature type="strand" evidence="2">
    <location>
        <begin position="5"/>
        <end position="12"/>
    </location>
</feature>
<feature type="strand" evidence="2">
    <location>
        <begin position="15"/>
        <end position="23"/>
    </location>
</feature>
<feature type="strand" evidence="2">
    <location>
        <begin position="30"/>
        <end position="35"/>
    </location>
</feature>
<feature type="strand" evidence="2">
    <location>
        <begin position="38"/>
        <end position="43"/>
    </location>
</feature>
<feature type="helix" evidence="2">
    <location>
        <begin position="48"/>
        <end position="52"/>
    </location>
</feature>
<feature type="strand" evidence="2">
    <location>
        <begin position="57"/>
        <end position="65"/>
    </location>
</feature>
<feature type="strand" evidence="2">
    <location>
        <begin position="68"/>
        <end position="74"/>
    </location>
</feature>
<feature type="helix" evidence="2">
    <location>
        <begin position="76"/>
        <end position="85"/>
    </location>
</feature>
<feature type="helix" evidence="2">
    <location>
        <begin position="90"/>
        <end position="101"/>
    </location>
</feature>
<feature type="strand" evidence="2">
    <location>
        <begin position="112"/>
        <end position="117"/>
    </location>
</feature>
<feature type="strand" evidence="2">
    <location>
        <begin position="122"/>
        <end position="128"/>
    </location>
</feature>
<feature type="strand" evidence="2">
    <location>
        <begin position="131"/>
        <end position="136"/>
    </location>
</feature>
<feature type="strand" evidence="2">
    <location>
        <begin position="143"/>
        <end position="149"/>
    </location>
</feature>
<feature type="helix" evidence="2">
    <location>
        <begin position="163"/>
        <end position="172"/>
    </location>
</feature>
<feature type="helix" evidence="2">
    <location>
        <begin position="174"/>
        <end position="178"/>
    </location>
</feature>
<feature type="strand" evidence="2">
    <location>
        <begin position="182"/>
        <end position="193"/>
    </location>
</feature>
<feature type="strand" evidence="2">
    <location>
        <begin position="195"/>
        <end position="201"/>
    </location>
</feature>
<keyword id="KW-0002">3D-structure</keyword>
<keyword id="KW-0378">Hydrolase</keyword>
<keyword id="KW-0658">Purine biosynthesis</keyword>
<keyword id="KW-1185">Reference proteome</keyword>
<sequence>MYLGRILAVGRNSNGSFVAYRVSSRSFPNRTTSIQEERVAVVPVEGHERDVFRNPYIAYNCIRIVGDTAVVSNGSHTDTIADKVALGMNLRDAIGLSLLAMDYEKDELNTPRIAAAINGSEAFIGIVTADGLMVSRVPEETPVYISTYEQTEPAATEFKAGSPEEAAEFILKGGEFAAFTHPVTAAAAFNDGEGWNLATREM</sequence>
<organism>
    <name type="scientific">Methanothermobacter thermautotrophicus (strain ATCC 29096 / DSM 1053 / JCM 10044 / NBRC 100330 / Delta H)</name>
    <name type="common">Methanobacterium thermoautotrophicum</name>
    <dbReference type="NCBI Taxonomy" id="187420"/>
    <lineage>
        <taxon>Archaea</taxon>
        <taxon>Methanobacteriati</taxon>
        <taxon>Methanobacteriota</taxon>
        <taxon>Methanomada group</taxon>
        <taxon>Methanobacteria</taxon>
        <taxon>Methanobacteriales</taxon>
        <taxon>Methanobacteriaceae</taxon>
        <taxon>Methanothermobacter</taxon>
    </lineage>
</organism>
<gene>
    <name evidence="1" type="primary">purO</name>
    <name type="ordered locus">MTH_1020</name>
</gene>
<name>PURO_METTH</name>
<evidence type="ECO:0000255" key="1">
    <source>
        <dbReference type="HAMAP-Rule" id="MF_00705"/>
    </source>
</evidence>
<evidence type="ECO:0007829" key="2">
    <source>
        <dbReference type="PDB" id="2NTK"/>
    </source>
</evidence>
<comment type="function">
    <text evidence="1">Catalyzes the cyclization of 5-formylamidoimidazole-4-carboxamide ribonucleotide to IMP.</text>
</comment>
<comment type="catalytic activity">
    <reaction evidence="1">
        <text>IMP + H2O = 5-formamido-1-(5-phospho-D-ribosyl)imidazole-4-carboxamide</text>
        <dbReference type="Rhea" id="RHEA:18445"/>
        <dbReference type="ChEBI" id="CHEBI:15377"/>
        <dbReference type="ChEBI" id="CHEBI:58053"/>
        <dbReference type="ChEBI" id="CHEBI:58467"/>
        <dbReference type="EC" id="3.5.4.10"/>
    </reaction>
</comment>
<comment type="pathway">
    <text evidence="1">Purine metabolism; IMP biosynthesis via de novo pathway; IMP from 5-formamido-1-(5-phospho-D-ribosyl)imidazole-4-carboxamide: step 1/1.</text>
</comment>
<comment type="similarity">
    <text evidence="1">Belongs to the archaeal IMP cyclohydrolase family.</text>
</comment>
<reference key="1">
    <citation type="journal article" date="1997" name="J. Bacteriol.">
        <title>Complete genome sequence of Methanobacterium thermoautotrophicum deltaH: functional analysis and comparative genomics.</title>
        <authorList>
            <person name="Smith D.R."/>
            <person name="Doucette-Stamm L.A."/>
            <person name="Deloughery C."/>
            <person name="Lee H.-M."/>
            <person name="Dubois J."/>
            <person name="Aldredge T."/>
            <person name="Bashirzadeh R."/>
            <person name="Blakely D."/>
            <person name="Cook R."/>
            <person name="Gilbert K."/>
            <person name="Harrison D."/>
            <person name="Hoang L."/>
            <person name="Keagle P."/>
            <person name="Lumm W."/>
            <person name="Pothier B."/>
            <person name="Qiu D."/>
            <person name="Spadafora R."/>
            <person name="Vicare R."/>
            <person name="Wang Y."/>
            <person name="Wierzbowski J."/>
            <person name="Gibson R."/>
            <person name="Jiwani N."/>
            <person name="Caruso A."/>
            <person name="Bush D."/>
            <person name="Safer H."/>
            <person name="Patwell D."/>
            <person name="Prabhakar S."/>
            <person name="McDougall S."/>
            <person name="Shimer G."/>
            <person name="Goyal A."/>
            <person name="Pietrovski S."/>
            <person name="Church G.M."/>
            <person name="Daniels C.J."/>
            <person name="Mao J.-I."/>
            <person name="Rice P."/>
            <person name="Noelling J."/>
            <person name="Reeve J.N."/>
        </authorList>
    </citation>
    <scope>NUCLEOTIDE SEQUENCE [LARGE SCALE GENOMIC DNA]</scope>
    <source>
        <strain>ATCC 29096 / DSM 1053 / JCM 10044 / NBRC 100330 / Delta H</strain>
    </source>
</reference>
<proteinExistence type="evidence at protein level"/>
<accession>O27099</accession>